<proteinExistence type="inferred from homology"/>
<feature type="chain" id="PRO_1000072838" description="Accessory gene regulator protein B">
    <location>
        <begin position="1"/>
        <end position="189"/>
    </location>
</feature>
<feature type="transmembrane region" description="Helical" evidence="1">
    <location>
        <begin position="49"/>
        <end position="69"/>
    </location>
</feature>
<feature type="transmembrane region" description="Helical" evidence="1">
    <location>
        <begin position="81"/>
        <end position="100"/>
    </location>
</feature>
<feature type="transmembrane region" description="Helical" evidence="1">
    <location>
        <begin position="110"/>
        <end position="130"/>
    </location>
</feature>
<feature type="transmembrane region" description="Helical" evidence="1">
    <location>
        <begin position="143"/>
        <end position="163"/>
    </location>
</feature>
<feature type="transmembrane region" description="Helical" evidence="1">
    <location>
        <begin position="164"/>
        <end position="184"/>
    </location>
</feature>
<gene>
    <name evidence="1" type="primary">agrB</name>
    <name type="ordered locus">NWMN_1943</name>
</gene>
<comment type="function">
    <text evidence="1">Essential for the production of a quorum sensing system signal molecule, the autoinducing peptide (AIP). This quorum sensing system is responsible for the regulation of the expression of virulence factor genes. Involved in the proteolytic processing of AgrD, the precursor of AIP.</text>
</comment>
<comment type="subcellular location">
    <subcellularLocation>
        <location evidence="1">Cell membrane</location>
        <topology evidence="1">Multi-pass membrane protein</topology>
    </subcellularLocation>
</comment>
<comment type="similarity">
    <text evidence="1">Belongs to the AgrB family.</text>
</comment>
<organism>
    <name type="scientific">Staphylococcus aureus (strain Newman)</name>
    <dbReference type="NCBI Taxonomy" id="426430"/>
    <lineage>
        <taxon>Bacteria</taxon>
        <taxon>Bacillati</taxon>
        <taxon>Bacillota</taxon>
        <taxon>Bacilli</taxon>
        <taxon>Bacillales</taxon>
        <taxon>Staphylococcaceae</taxon>
        <taxon>Staphylococcus</taxon>
    </lineage>
</organism>
<evidence type="ECO:0000255" key="1">
    <source>
        <dbReference type="HAMAP-Rule" id="MF_00784"/>
    </source>
</evidence>
<protein>
    <recommendedName>
        <fullName evidence="1">Accessory gene regulator protein B</fullName>
        <ecNumber evidence="1">3.4.-.-</ecNumber>
    </recommendedName>
</protein>
<keyword id="KW-1003">Cell membrane</keyword>
<keyword id="KW-0378">Hydrolase</keyword>
<keyword id="KW-0472">Membrane</keyword>
<keyword id="KW-0645">Protease</keyword>
<keyword id="KW-0673">Quorum sensing</keyword>
<keyword id="KW-0812">Transmembrane</keyword>
<keyword id="KW-1133">Transmembrane helix</keyword>
<keyword id="KW-0843">Virulence</keyword>
<dbReference type="EC" id="3.4.-.-" evidence="1"/>
<dbReference type="EMBL" id="AP009351">
    <property type="protein sequence ID" value="BAF68215.1"/>
    <property type="molecule type" value="Genomic_DNA"/>
</dbReference>
<dbReference type="RefSeq" id="WP_001105707.1">
    <property type="nucleotide sequence ID" value="NZ_JBBIAE010000015.1"/>
</dbReference>
<dbReference type="MEROPS" id="C75.001"/>
<dbReference type="KEGG" id="sae:NWMN_1943"/>
<dbReference type="HOGENOM" id="CLU_098969_2_2_9"/>
<dbReference type="Proteomes" id="UP000006386">
    <property type="component" value="Chromosome"/>
</dbReference>
<dbReference type="GO" id="GO:0005886">
    <property type="term" value="C:plasma membrane"/>
    <property type="evidence" value="ECO:0007669"/>
    <property type="project" value="UniProtKB-SubCell"/>
</dbReference>
<dbReference type="GO" id="GO:0008233">
    <property type="term" value="F:peptidase activity"/>
    <property type="evidence" value="ECO:0007669"/>
    <property type="project" value="UniProtKB-UniRule"/>
</dbReference>
<dbReference type="GO" id="GO:0006508">
    <property type="term" value="P:proteolysis"/>
    <property type="evidence" value="ECO:0007669"/>
    <property type="project" value="UniProtKB-KW"/>
</dbReference>
<dbReference type="GO" id="GO:0009372">
    <property type="term" value="P:quorum sensing"/>
    <property type="evidence" value="ECO:0007669"/>
    <property type="project" value="UniProtKB-UniRule"/>
</dbReference>
<dbReference type="HAMAP" id="MF_00784">
    <property type="entry name" value="AgrB"/>
    <property type="match status" value="1"/>
</dbReference>
<dbReference type="InterPro" id="IPR006741">
    <property type="entry name" value="AgrB"/>
</dbReference>
<dbReference type="Pfam" id="PF04647">
    <property type="entry name" value="AgrB"/>
    <property type="match status" value="1"/>
</dbReference>
<dbReference type="SMART" id="SM00793">
    <property type="entry name" value="AgrB"/>
    <property type="match status" value="1"/>
</dbReference>
<accession>A6QIN3</accession>
<name>AGRB_STAAE</name>
<reference key="1">
    <citation type="journal article" date="2008" name="J. Bacteriol.">
        <title>Genome sequence of Staphylococcus aureus strain Newman and comparative analysis of staphylococcal genomes: polymorphism and evolution of two major pathogenicity islands.</title>
        <authorList>
            <person name="Baba T."/>
            <person name="Bae T."/>
            <person name="Schneewind O."/>
            <person name="Takeuchi F."/>
            <person name="Hiramatsu K."/>
        </authorList>
    </citation>
    <scope>NUCLEOTIDE SEQUENCE [LARGE SCALE GENOMIC DNA]</scope>
    <source>
        <strain>Newman</strain>
    </source>
</reference>
<sequence length="189" mass="21930">MNYFDNKIDQFATYLQKRNNLDHIQFLQVRLGMQVLAKNIGKLIVMYTIAYILNIFLFTLITNLTFYLIRRHAHGAHAPSSFWCYVESIILFILLPLVIVNFHINFLIMIILTVISLGVISVYAPAATKKKPIPVRLIKRKKYYAIIVSLTLFIITLIIKEPFAQFIQLGIIIEAITLLPIFFIKEDLK</sequence>